<reference key="1">
    <citation type="journal article" date="2004" name="Proc. Natl. Acad. Sci. U.S.A.">
        <title>The complete genomic sequence of Nocardia farcinica IFM 10152.</title>
        <authorList>
            <person name="Ishikawa J."/>
            <person name="Yamashita A."/>
            <person name="Mikami Y."/>
            <person name="Hoshino Y."/>
            <person name="Kurita H."/>
            <person name="Hotta K."/>
            <person name="Shiba T."/>
            <person name="Hattori M."/>
        </authorList>
    </citation>
    <scope>NUCLEOTIDE SEQUENCE [LARGE SCALE GENOMIC DNA]</scope>
    <source>
        <strain>IFM 10152</strain>
    </source>
</reference>
<feature type="chain" id="PRO_0000174795" description="Co-chaperonin GroES">
    <location>
        <begin position="1"/>
        <end position="100"/>
    </location>
</feature>
<name>CH10_NOCFA</name>
<evidence type="ECO:0000255" key="1">
    <source>
        <dbReference type="HAMAP-Rule" id="MF_00580"/>
    </source>
</evidence>
<comment type="function">
    <text evidence="1">Together with the chaperonin GroEL, plays an essential role in assisting protein folding. The GroEL-GroES system forms a nano-cage that allows encapsulation of the non-native substrate proteins and provides a physical environment optimized to promote and accelerate protein folding. GroES binds to the apical surface of the GroEL ring, thereby capping the opening of the GroEL channel.</text>
</comment>
<comment type="subunit">
    <text evidence="1">Heptamer of 7 subunits arranged in a ring. Interacts with the chaperonin GroEL.</text>
</comment>
<comment type="subcellular location">
    <subcellularLocation>
        <location evidence="1">Cytoplasm</location>
    </subcellularLocation>
</comment>
<comment type="similarity">
    <text evidence="1">Belongs to the GroES chaperonin family.</text>
</comment>
<organism>
    <name type="scientific">Nocardia farcinica (strain IFM 10152)</name>
    <dbReference type="NCBI Taxonomy" id="247156"/>
    <lineage>
        <taxon>Bacteria</taxon>
        <taxon>Bacillati</taxon>
        <taxon>Actinomycetota</taxon>
        <taxon>Actinomycetes</taxon>
        <taxon>Mycobacteriales</taxon>
        <taxon>Nocardiaceae</taxon>
        <taxon>Nocardia</taxon>
    </lineage>
</organism>
<keyword id="KW-0143">Chaperone</keyword>
<keyword id="KW-0963">Cytoplasm</keyword>
<keyword id="KW-1185">Reference proteome</keyword>
<dbReference type="EMBL" id="AP006618">
    <property type="protein sequence ID" value="BAD55731.1"/>
    <property type="molecule type" value="Genomic_DNA"/>
</dbReference>
<dbReference type="RefSeq" id="WP_011207416.1">
    <property type="nucleotide sequence ID" value="NC_006361.1"/>
</dbReference>
<dbReference type="SMR" id="Q5Z1G0"/>
<dbReference type="STRING" id="247156.NFA_8860"/>
<dbReference type="GeneID" id="61131714"/>
<dbReference type="KEGG" id="nfa:NFA_8860"/>
<dbReference type="eggNOG" id="COG0234">
    <property type="taxonomic scope" value="Bacteria"/>
</dbReference>
<dbReference type="HOGENOM" id="CLU_132825_2_0_11"/>
<dbReference type="OrthoDB" id="9806791at2"/>
<dbReference type="Proteomes" id="UP000006820">
    <property type="component" value="Chromosome"/>
</dbReference>
<dbReference type="GO" id="GO:0005737">
    <property type="term" value="C:cytoplasm"/>
    <property type="evidence" value="ECO:0007669"/>
    <property type="project" value="UniProtKB-SubCell"/>
</dbReference>
<dbReference type="GO" id="GO:0005524">
    <property type="term" value="F:ATP binding"/>
    <property type="evidence" value="ECO:0007669"/>
    <property type="project" value="InterPro"/>
</dbReference>
<dbReference type="GO" id="GO:0046872">
    <property type="term" value="F:metal ion binding"/>
    <property type="evidence" value="ECO:0007669"/>
    <property type="project" value="TreeGrafter"/>
</dbReference>
<dbReference type="GO" id="GO:0044183">
    <property type="term" value="F:protein folding chaperone"/>
    <property type="evidence" value="ECO:0007669"/>
    <property type="project" value="InterPro"/>
</dbReference>
<dbReference type="GO" id="GO:0051087">
    <property type="term" value="F:protein-folding chaperone binding"/>
    <property type="evidence" value="ECO:0007669"/>
    <property type="project" value="TreeGrafter"/>
</dbReference>
<dbReference type="GO" id="GO:0051082">
    <property type="term" value="F:unfolded protein binding"/>
    <property type="evidence" value="ECO:0007669"/>
    <property type="project" value="TreeGrafter"/>
</dbReference>
<dbReference type="GO" id="GO:0051085">
    <property type="term" value="P:chaperone cofactor-dependent protein refolding"/>
    <property type="evidence" value="ECO:0007669"/>
    <property type="project" value="TreeGrafter"/>
</dbReference>
<dbReference type="CDD" id="cd00320">
    <property type="entry name" value="cpn10"/>
    <property type="match status" value="1"/>
</dbReference>
<dbReference type="FunFam" id="2.30.33.40:FF:000001">
    <property type="entry name" value="10 kDa chaperonin"/>
    <property type="match status" value="1"/>
</dbReference>
<dbReference type="Gene3D" id="2.30.33.40">
    <property type="entry name" value="GroES chaperonin"/>
    <property type="match status" value="1"/>
</dbReference>
<dbReference type="HAMAP" id="MF_00580">
    <property type="entry name" value="CH10"/>
    <property type="match status" value="1"/>
</dbReference>
<dbReference type="InterPro" id="IPR020818">
    <property type="entry name" value="Chaperonin_GroES"/>
</dbReference>
<dbReference type="InterPro" id="IPR037124">
    <property type="entry name" value="Chaperonin_GroES_sf"/>
</dbReference>
<dbReference type="InterPro" id="IPR018369">
    <property type="entry name" value="Chaprnonin_Cpn10_CS"/>
</dbReference>
<dbReference type="InterPro" id="IPR011032">
    <property type="entry name" value="GroES-like_sf"/>
</dbReference>
<dbReference type="NCBIfam" id="NF001530">
    <property type="entry name" value="PRK00364.1-6"/>
    <property type="match status" value="1"/>
</dbReference>
<dbReference type="NCBIfam" id="NF001531">
    <property type="entry name" value="PRK00364.2-2"/>
    <property type="match status" value="1"/>
</dbReference>
<dbReference type="NCBIfam" id="NF001533">
    <property type="entry name" value="PRK00364.2-4"/>
    <property type="match status" value="1"/>
</dbReference>
<dbReference type="NCBIfam" id="NF001534">
    <property type="entry name" value="PRK00364.2-5"/>
    <property type="match status" value="1"/>
</dbReference>
<dbReference type="PANTHER" id="PTHR10772">
    <property type="entry name" value="10 KDA HEAT SHOCK PROTEIN"/>
    <property type="match status" value="1"/>
</dbReference>
<dbReference type="PANTHER" id="PTHR10772:SF58">
    <property type="entry name" value="CO-CHAPERONIN GROES"/>
    <property type="match status" value="1"/>
</dbReference>
<dbReference type="Pfam" id="PF00166">
    <property type="entry name" value="Cpn10"/>
    <property type="match status" value="1"/>
</dbReference>
<dbReference type="PRINTS" id="PR00297">
    <property type="entry name" value="CHAPERONIN10"/>
</dbReference>
<dbReference type="SMART" id="SM00883">
    <property type="entry name" value="Cpn10"/>
    <property type="match status" value="1"/>
</dbReference>
<dbReference type="SUPFAM" id="SSF50129">
    <property type="entry name" value="GroES-like"/>
    <property type="match status" value="1"/>
</dbReference>
<dbReference type="PROSITE" id="PS00681">
    <property type="entry name" value="CHAPERONINS_CPN10"/>
    <property type="match status" value="1"/>
</dbReference>
<accession>Q5Z1G0</accession>
<protein>
    <recommendedName>
        <fullName evidence="1">Co-chaperonin GroES</fullName>
    </recommendedName>
    <alternativeName>
        <fullName evidence="1">10 kDa chaperonin</fullName>
    </alternativeName>
    <alternativeName>
        <fullName evidence="1">Chaperonin-10</fullName>
        <shortName evidence="1">Cpn10</shortName>
    </alternativeName>
</protein>
<gene>
    <name evidence="1" type="primary">groES</name>
    <name evidence="1" type="synonym">groS</name>
    <name type="ordered locus">NFA_8860</name>
</gene>
<sequence>MASVNIKPLEDKILVQANEAETTTASGLVIPDTAKEKPQEGTVVAVGPGRWDEDGEKRIPLDVQEGDTVIYSKYGGTEIKYQGEEYLILSARDVLAVVGK</sequence>
<proteinExistence type="inferred from homology"/>